<keyword id="KW-0240">DNA-directed RNA polymerase</keyword>
<keyword id="KW-0548">Nucleotidyltransferase</keyword>
<keyword id="KW-0804">Transcription</keyword>
<keyword id="KW-0808">Transferase</keyword>
<protein>
    <recommendedName>
        <fullName evidence="1">Probable DNA-directed RNA polymerase subunit delta</fullName>
    </recommendedName>
    <alternativeName>
        <fullName evidence="1">RNAP delta factor</fullName>
    </alternativeName>
</protein>
<organism>
    <name type="scientific">Bacillus cereus (strain ZK / E33L)</name>
    <dbReference type="NCBI Taxonomy" id="288681"/>
    <lineage>
        <taxon>Bacteria</taxon>
        <taxon>Bacillati</taxon>
        <taxon>Bacillota</taxon>
        <taxon>Bacilli</taxon>
        <taxon>Bacillales</taxon>
        <taxon>Bacillaceae</taxon>
        <taxon>Bacillus</taxon>
        <taxon>Bacillus cereus group</taxon>
    </lineage>
</organism>
<gene>
    <name evidence="1" type="primary">rpoE</name>
    <name type="ordered locus">BCE33L5039</name>
</gene>
<name>RPOE_BACCZ</name>
<reference key="1">
    <citation type="journal article" date="2006" name="J. Bacteriol.">
        <title>Pathogenomic sequence analysis of Bacillus cereus and Bacillus thuringiensis isolates closely related to Bacillus anthracis.</title>
        <authorList>
            <person name="Han C.S."/>
            <person name="Xie G."/>
            <person name="Challacombe J.F."/>
            <person name="Altherr M.R."/>
            <person name="Bhotika S.S."/>
            <person name="Bruce D."/>
            <person name="Campbell C.S."/>
            <person name="Campbell M.L."/>
            <person name="Chen J."/>
            <person name="Chertkov O."/>
            <person name="Cleland C."/>
            <person name="Dimitrijevic M."/>
            <person name="Doggett N.A."/>
            <person name="Fawcett J.J."/>
            <person name="Glavina T."/>
            <person name="Goodwin L.A."/>
            <person name="Hill K.K."/>
            <person name="Hitchcock P."/>
            <person name="Jackson P.J."/>
            <person name="Keim P."/>
            <person name="Kewalramani A.R."/>
            <person name="Longmire J."/>
            <person name="Lucas S."/>
            <person name="Malfatti S."/>
            <person name="McMurry K."/>
            <person name="Meincke L.J."/>
            <person name="Misra M."/>
            <person name="Moseman B.L."/>
            <person name="Mundt M."/>
            <person name="Munk A.C."/>
            <person name="Okinaka R.T."/>
            <person name="Parson-Quintana B."/>
            <person name="Reilly L.P."/>
            <person name="Richardson P."/>
            <person name="Robinson D.L."/>
            <person name="Rubin E."/>
            <person name="Saunders E."/>
            <person name="Tapia R."/>
            <person name="Tesmer J.G."/>
            <person name="Thayer N."/>
            <person name="Thompson L.S."/>
            <person name="Tice H."/>
            <person name="Ticknor L.O."/>
            <person name="Wills P.L."/>
            <person name="Brettin T.S."/>
            <person name="Gilna P."/>
        </authorList>
    </citation>
    <scope>NUCLEOTIDE SEQUENCE [LARGE SCALE GENOMIC DNA]</scope>
    <source>
        <strain>ZK / E33L</strain>
    </source>
</reference>
<comment type="function">
    <text evidence="1">Participates in both the initiation and recycling phases of transcription. In the presence of the delta subunit, RNAP displays an increased specificity of transcription, a decreased affinity for nucleic acids, and an increased efficiency of RNA synthesis because of enhanced recycling.</text>
</comment>
<comment type="subunit">
    <text evidence="1">RNAP is composed of a core of 2 alpha, a beta and a beta' subunits. The core is associated with a delta subunit and one of several sigma factors.</text>
</comment>
<comment type="similarity">
    <text evidence="1">Belongs to the RpoE family.</text>
</comment>
<feature type="chain" id="PRO_0000303120" description="Probable DNA-directed RNA polymerase subunit delta">
    <location>
        <begin position="1"/>
        <end position="176"/>
    </location>
</feature>
<feature type="domain" description="HTH HARE-type" evidence="2">
    <location>
        <begin position="14"/>
        <end position="81"/>
    </location>
</feature>
<feature type="region of interest" description="Disordered" evidence="3">
    <location>
        <begin position="91"/>
        <end position="176"/>
    </location>
</feature>
<feature type="compositionally biased region" description="Acidic residues" evidence="3">
    <location>
        <begin position="106"/>
        <end position="176"/>
    </location>
</feature>
<accession>Q630Q9</accession>
<dbReference type="EMBL" id="CP000001">
    <property type="protein sequence ID" value="AAU15240.1"/>
    <property type="molecule type" value="Genomic_DNA"/>
</dbReference>
<dbReference type="RefSeq" id="WP_000346287.1">
    <property type="nucleotide sequence ID" value="NZ_CP009968.1"/>
</dbReference>
<dbReference type="SMR" id="Q630Q9"/>
<dbReference type="KEGG" id="bcz:BCE33L5039"/>
<dbReference type="PATRIC" id="fig|288681.22.peg.305"/>
<dbReference type="Proteomes" id="UP000002612">
    <property type="component" value="Chromosome"/>
</dbReference>
<dbReference type="GO" id="GO:0000428">
    <property type="term" value="C:DNA-directed RNA polymerase complex"/>
    <property type="evidence" value="ECO:0007669"/>
    <property type="project" value="UniProtKB-KW"/>
</dbReference>
<dbReference type="GO" id="GO:0003899">
    <property type="term" value="F:DNA-directed RNA polymerase activity"/>
    <property type="evidence" value="ECO:0007669"/>
    <property type="project" value="UniProtKB-UniRule"/>
</dbReference>
<dbReference type="GO" id="GO:0006351">
    <property type="term" value="P:DNA-templated transcription"/>
    <property type="evidence" value="ECO:0007669"/>
    <property type="project" value="InterPro"/>
</dbReference>
<dbReference type="GO" id="GO:0006355">
    <property type="term" value="P:regulation of DNA-templated transcription"/>
    <property type="evidence" value="ECO:0007669"/>
    <property type="project" value="UniProtKB-UniRule"/>
</dbReference>
<dbReference type="FunFam" id="1.10.10.1250:FF:000001">
    <property type="entry name" value="Probable DNA-directed RNA polymerase subunit delta"/>
    <property type="match status" value="1"/>
</dbReference>
<dbReference type="Gene3D" id="1.10.10.1250">
    <property type="entry name" value="RNA polymerase, subunit delta, N-terminal domain"/>
    <property type="match status" value="1"/>
</dbReference>
<dbReference type="HAMAP" id="MF_00357">
    <property type="entry name" value="RNApol_bact_RpoE"/>
    <property type="match status" value="1"/>
</dbReference>
<dbReference type="InterPro" id="IPR007759">
    <property type="entry name" value="Asxl_HARE-HTH"/>
</dbReference>
<dbReference type="InterPro" id="IPR038087">
    <property type="entry name" value="RNAP_delta_N_dom_sf"/>
</dbReference>
<dbReference type="InterPro" id="IPR029757">
    <property type="entry name" value="RpoE"/>
</dbReference>
<dbReference type="NCBIfam" id="TIGR04567">
    <property type="entry name" value="RNAP_delt_lowGC"/>
    <property type="match status" value="1"/>
</dbReference>
<dbReference type="Pfam" id="PF05066">
    <property type="entry name" value="HARE-HTH"/>
    <property type="match status" value="1"/>
</dbReference>
<dbReference type="PROSITE" id="PS51913">
    <property type="entry name" value="HTH_HARE"/>
    <property type="match status" value="1"/>
</dbReference>
<proteinExistence type="inferred from homology"/>
<evidence type="ECO:0000255" key="1">
    <source>
        <dbReference type="HAMAP-Rule" id="MF_00357"/>
    </source>
</evidence>
<evidence type="ECO:0000255" key="2">
    <source>
        <dbReference type="PROSITE-ProRule" id="PRU01261"/>
    </source>
</evidence>
<evidence type="ECO:0000256" key="3">
    <source>
        <dbReference type="SAM" id="MobiDB-lite"/>
    </source>
</evidence>
<sequence length="176" mass="20723">MDFKQYSPEELKECSMIEVVHSVLGDKRQATTFNELVQEIAQVLGLSQEQVNAKIAQFYTDLNIDGRFINLGENRWGLRSWYPYEQIDEEILPQPKPKKKRKVEDDGFDDYIEEDEDFDDADVTEDEDDDVEDLDKVLEDEDGDDDDLDDLDEDEDDFAEEELEYDETEEEEEEEL</sequence>